<dbReference type="EC" id="2.7.11.1"/>
<dbReference type="EMBL" id="AC144743">
    <property type="status" value="NOT_ANNOTATED_CDS"/>
    <property type="molecule type" value="Genomic_DNA"/>
</dbReference>
<dbReference type="EMBL" id="AP008211">
    <property type="status" value="NOT_ANNOTATED_CDS"/>
    <property type="molecule type" value="Genomic_DNA"/>
</dbReference>
<dbReference type="EMBL" id="AP014961">
    <property type="protein sequence ID" value="BAS94535.1"/>
    <property type="molecule type" value="Genomic_DNA"/>
</dbReference>
<dbReference type="EMBL" id="CM000142">
    <property type="status" value="NOT_ANNOTATED_CDS"/>
    <property type="molecule type" value="Genomic_DNA"/>
</dbReference>
<dbReference type="SMR" id="A3B529"/>
<dbReference type="FunCoup" id="A3B529">
    <property type="interactions" value="150"/>
</dbReference>
<dbReference type="STRING" id="39947.A3B529"/>
<dbReference type="PaxDb" id="39947-A3B529"/>
<dbReference type="EnsemblPlants" id="Os05t0476350-00">
    <property type="protein sequence ID" value="Os05t0476350-00"/>
    <property type="gene ID" value="Os05g0476350"/>
</dbReference>
<dbReference type="GeneID" id="107277347"/>
<dbReference type="Gramene" id="Os05t0476350-00">
    <property type="protein sequence ID" value="Os05t0476350-00"/>
    <property type="gene ID" value="Os05g0476350"/>
</dbReference>
<dbReference type="KEGG" id="osa:107277347"/>
<dbReference type="eggNOG" id="KOG0583">
    <property type="taxonomic scope" value="Eukaryota"/>
</dbReference>
<dbReference type="HOGENOM" id="CLU_000288_59_0_1"/>
<dbReference type="InParanoid" id="A3B529"/>
<dbReference type="OMA" id="ISAMDYC"/>
<dbReference type="OrthoDB" id="193931at2759"/>
<dbReference type="Proteomes" id="UP000000763">
    <property type="component" value="Chromosome 5"/>
</dbReference>
<dbReference type="Proteomes" id="UP000007752">
    <property type="component" value="Chromosome 5"/>
</dbReference>
<dbReference type="Proteomes" id="UP000059680">
    <property type="component" value="Chromosome 5"/>
</dbReference>
<dbReference type="GO" id="GO:0005524">
    <property type="term" value="F:ATP binding"/>
    <property type="evidence" value="ECO:0007669"/>
    <property type="project" value="UniProtKB-KW"/>
</dbReference>
<dbReference type="GO" id="GO:0106310">
    <property type="term" value="F:protein serine kinase activity"/>
    <property type="evidence" value="ECO:0007669"/>
    <property type="project" value="RHEA"/>
</dbReference>
<dbReference type="GO" id="GO:0004674">
    <property type="term" value="F:protein serine/threonine kinase activity"/>
    <property type="evidence" value="ECO:0000318"/>
    <property type="project" value="GO_Central"/>
</dbReference>
<dbReference type="GO" id="GO:0007165">
    <property type="term" value="P:signal transduction"/>
    <property type="evidence" value="ECO:0000318"/>
    <property type="project" value="GO_Central"/>
</dbReference>
<dbReference type="CDD" id="cd12195">
    <property type="entry name" value="CIPK_C"/>
    <property type="match status" value="1"/>
</dbReference>
<dbReference type="FunFam" id="1.10.510.10:FF:000279">
    <property type="entry name" value="Non-specific serine/threonine protein kinase"/>
    <property type="match status" value="1"/>
</dbReference>
<dbReference type="FunFam" id="3.30.200.20:FF:000096">
    <property type="entry name" value="Non-specific serine/threonine protein kinase"/>
    <property type="match status" value="1"/>
</dbReference>
<dbReference type="FunFam" id="3.30.310.80:FF:000005">
    <property type="entry name" value="Non-specific serine/threonine protein kinase"/>
    <property type="match status" value="1"/>
</dbReference>
<dbReference type="Gene3D" id="3.30.310.80">
    <property type="entry name" value="Kinase associated domain 1, KA1"/>
    <property type="match status" value="1"/>
</dbReference>
<dbReference type="Gene3D" id="1.10.510.10">
    <property type="entry name" value="Transferase(Phosphotransferase) domain 1"/>
    <property type="match status" value="1"/>
</dbReference>
<dbReference type="InterPro" id="IPR011009">
    <property type="entry name" value="Kinase-like_dom_sf"/>
</dbReference>
<dbReference type="InterPro" id="IPR018451">
    <property type="entry name" value="NAF/FISL_domain"/>
</dbReference>
<dbReference type="InterPro" id="IPR004041">
    <property type="entry name" value="NAF_dom"/>
</dbReference>
<dbReference type="InterPro" id="IPR000719">
    <property type="entry name" value="Prot_kinase_dom"/>
</dbReference>
<dbReference type="InterPro" id="IPR017441">
    <property type="entry name" value="Protein_kinase_ATP_BS"/>
</dbReference>
<dbReference type="InterPro" id="IPR008271">
    <property type="entry name" value="Ser/Thr_kinase_AS"/>
</dbReference>
<dbReference type="PANTHER" id="PTHR43895">
    <property type="entry name" value="CALCIUM/CALMODULIN-DEPENDENT PROTEIN KINASE KINASE-RELATED"/>
    <property type="match status" value="1"/>
</dbReference>
<dbReference type="PANTHER" id="PTHR43895:SF21">
    <property type="entry name" value="CBL-INTERACTING PROTEIN KINASE 28"/>
    <property type="match status" value="1"/>
</dbReference>
<dbReference type="Pfam" id="PF03822">
    <property type="entry name" value="NAF"/>
    <property type="match status" value="1"/>
</dbReference>
<dbReference type="Pfam" id="PF00069">
    <property type="entry name" value="Pkinase"/>
    <property type="match status" value="1"/>
</dbReference>
<dbReference type="SMART" id="SM00220">
    <property type="entry name" value="S_TKc"/>
    <property type="match status" value="1"/>
</dbReference>
<dbReference type="SUPFAM" id="SSF56112">
    <property type="entry name" value="Protein kinase-like (PK-like)"/>
    <property type="match status" value="1"/>
</dbReference>
<dbReference type="PROSITE" id="PS50816">
    <property type="entry name" value="NAF"/>
    <property type="match status" value="1"/>
</dbReference>
<dbReference type="PROSITE" id="PS00107">
    <property type="entry name" value="PROTEIN_KINASE_ATP"/>
    <property type="match status" value="1"/>
</dbReference>
<dbReference type="PROSITE" id="PS50011">
    <property type="entry name" value="PROTEIN_KINASE_DOM"/>
    <property type="match status" value="1"/>
</dbReference>
<dbReference type="PROSITE" id="PS00108">
    <property type="entry name" value="PROTEIN_KINASE_ST"/>
    <property type="match status" value="1"/>
</dbReference>
<sequence>MEERSVLMERYVIGRQLGQGTFGKVYYARNLSSGQSVAIKMIDKEKILKVGLMEQIKREISIMRLVRHPNVLQLFEVMATKSNIYFALEYAKGGELFHKMARAKLNEESARNYFQQLISAMDYCHSRGVYHRDLKPENLLLDENETLKVSDFGLSALAESRRQDGLLHTACGTPAYVAPEVLSRKGYSGSKADVWSCGVILFVLVANYLPFHDRNIIQMYRKIAKAEYRCPRHFSAELKELLYGILDPDPSTRMSISRIKRSAWYRKPIAISALNNETGKKSCTSEAPFSGPTICISSERNQEPPNLHNLNAFDIISLSTGFDLSGLFGERYGRRESLFTSRKPAAAVLVKLKELAKALNLKVTKTDNGVLKLATTKEGRKGRLELDAEVSEVAPFLLVELKKTNGDTLEYQRMMKEDIRPSLKDIIWTWQGDQQ</sequence>
<organism>
    <name type="scientific">Oryza sativa subsp. japonica</name>
    <name type="common">Rice</name>
    <dbReference type="NCBI Taxonomy" id="39947"/>
    <lineage>
        <taxon>Eukaryota</taxon>
        <taxon>Viridiplantae</taxon>
        <taxon>Streptophyta</taxon>
        <taxon>Embryophyta</taxon>
        <taxon>Tracheophyta</taxon>
        <taxon>Spermatophyta</taxon>
        <taxon>Magnoliopsida</taxon>
        <taxon>Liliopsida</taxon>
        <taxon>Poales</taxon>
        <taxon>Poaceae</taxon>
        <taxon>BOP clade</taxon>
        <taxon>Oryzoideae</taxon>
        <taxon>Oryzeae</taxon>
        <taxon>Oryzinae</taxon>
        <taxon>Oryza</taxon>
        <taxon>Oryza sativa</taxon>
    </lineage>
</organism>
<evidence type="ECO:0000250" key="1"/>
<evidence type="ECO:0000255" key="2">
    <source>
        <dbReference type="PROSITE-ProRule" id="PRU00159"/>
    </source>
</evidence>
<evidence type="ECO:0000255" key="3">
    <source>
        <dbReference type="PROSITE-ProRule" id="PRU00256"/>
    </source>
</evidence>
<evidence type="ECO:0000255" key="4">
    <source>
        <dbReference type="PROSITE-ProRule" id="PRU10027"/>
    </source>
</evidence>
<evidence type="ECO:0000269" key="5">
    <source>
    </source>
</evidence>
<evidence type="ECO:0000305" key="6"/>
<reference key="1">
    <citation type="journal article" date="2005" name="Mol. Genet. Genomics">
        <title>A fine physical map of the rice chromosome 5.</title>
        <authorList>
            <person name="Cheng C.-H."/>
            <person name="Chung M.C."/>
            <person name="Liu S.-M."/>
            <person name="Chen S.-K."/>
            <person name="Kao F.Y."/>
            <person name="Lin S.-J."/>
            <person name="Hsiao S.-H."/>
            <person name="Tseng I.C."/>
            <person name="Hsing Y.-I.C."/>
            <person name="Wu H.-P."/>
            <person name="Chen C.-S."/>
            <person name="Shaw J.-F."/>
            <person name="Wu J."/>
            <person name="Matsumoto T."/>
            <person name="Sasaki T."/>
            <person name="Chen H.-C."/>
            <person name="Chow T.-Y."/>
        </authorList>
    </citation>
    <scope>NUCLEOTIDE SEQUENCE [LARGE SCALE GENOMIC DNA]</scope>
    <source>
        <strain>cv. Nipponbare</strain>
    </source>
</reference>
<reference key="2">
    <citation type="journal article" date="2005" name="Nature">
        <title>The map-based sequence of the rice genome.</title>
        <authorList>
            <consortium name="International rice genome sequencing project (IRGSP)"/>
        </authorList>
    </citation>
    <scope>NUCLEOTIDE SEQUENCE [LARGE SCALE GENOMIC DNA]</scope>
    <source>
        <strain>cv. Nipponbare</strain>
    </source>
</reference>
<reference key="3">
    <citation type="journal article" date="2008" name="Nucleic Acids Res.">
        <title>The rice annotation project database (RAP-DB): 2008 update.</title>
        <authorList>
            <consortium name="The rice annotation project (RAP)"/>
        </authorList>
    </citation>
    <scope>GENOME REANNOTATION</scope>
    <source>
        <strain>cv. Nipponbare</strain>
    </source>
</reference>
<reference key="4">
    <citation type="journal article" date="2013" name="Rice">
        <title>Improvement of the Oryza sativa Nipponbare reference genome using next generation sequence and optical map data.</title>
        <authorList>
            <person name="Kawahara Y."/>
            <person name="de la Bastide M."/>
            <person name="Hamilton J.P."/>
            <person name="Kanamori H."/>
            <person name="McCombie W.R."/>
            <person name="Ouyang S."/>
            <person name="Schwartz D.C."/>
            <person name="Tanaka T."/>
            <person name="Wu J."/>
            <person name="Zhou S."/>
            <person name="Childs K.L."/>
            <person name="Davidson R.M."/>
            <person name="Lin H."/>
            <person name="Quesada-Ocampo L."/>
            <person name="Vaillancourt B."/>
            <person name="Sakai H."/>
            <person name="Lee S.S."/>
            <person name="Kim J."/>
            <person name="Numa H."/>
            <person name="Itoh T."/>
            <person name="Buell C.R."/>
            <person name="Matsumoto T."/>
        </authorList>
    </citation>
    <scope>GENOME REANNOTATION</scope>
    <source>
        <strain>cv. Nipponbare</strain>
    </source>
</reference>
<reference key="5">
    <citation type="journal article" date="2005" name="PLoS Biol.">
        <title>The genomes of Oryza sativa: a history of duplications.</title>
        <authorList>
            <person name="Yu J."/>
            <person name="Wang J."/>
            <person name="Lin W."/>
            <person name="Li S."/>
            <person name="Li H."/>
            <person name="Zhou J."/>
            <person name="Ni P."/>
            <person name="Dong W."/>
            <person name="Hu S."/>
            <person name="Zeng C."/>
            <person name="Zhang J."/>
            <person name="Zhang Y."/>
            <person name="Li R."/>
            <person name="Xu Z."/>
            <person name="Li S."/>
            <person name="Li X."/>
            <person name="Zheng H."/>
            <person name="Cong L."/>
            <person name="Lin L."/>
            <person name="Yin J."/>
            <person name="Geng J."/>
            <person name="Li G."/>
            <person name="Shi J."/>
            <person name="Liu J."/>
            <person name="Lv H."/>
            <person name="Li J."/>
            <person name="Wang J."/>
            <person name="Deng Y."/>
            <person name="Ran L."/>
            <person name="Shi X."/>
            <person name="Wang X."/>
            <person name="Wu Q."/>
            <person name="Li C."/>
            <person name="Ren X."/>
            <person name="Wang J."/>
            <person name="Wang X."/>
            <person name="Li D."/>
            <person name="Liu D."/>
            <person name="Zhang X."/>
            <person name="Ji Z."/>
            <person name="Zhao W."/>
            <person name="Sun Y."/>
            <person name="Zhang Z."/>
            <person name="Bao J."/>
            <person name="Han Y."/>
            <person name="Dong L."/>
            <person name="Ji J."/>
            <person name="Chen P."/>
            <person name="Wu S."/>
            <person name="Liu J."/>
            <person name="Xiao Y."/>
            <person name="Bu D."/>
            <person name="Tan J."/>
            <person name="Yang L."/>
            <person name="Ye C."/>
            <person name="Zhang J."/>
            <person name="Xu J."/>
            <person name="Zhou Y."/>
            <person name="Yu Y."/>
            <person name="Zhang B."/>
            <person name="Zhuang S."/>
            <person name="Wei H."/>
            <person name="Liu B."/>
            <person name="Lei M."/>
            <person name="Yu H."/>
            <person name="Li Y."/>
            <person name="Xu H."/>
            <person name="Wei S."/>
            <person name="He X."/>
            <person name="Fang L."/>
            <person name="Zhang Z."/>
            <person name="Zhang Y."/>
            <person name="Huang X."/>
            <person name="Su Z."/>
            <person name="Tong W."/>
            <person name="Li J."/>
            <person name="Tong Z."/>
            <person name="Li S."/>
            <person name="Ye J."/>
            <person name="Wang L."/>
            <person name="Fang L."/>
            <person name="Lei T."/>
            <person name="Chen C.-S."/>
            <person name="Chen H.-C."/>
            <person name="Xu Z."/>
            <person name="Li H."/>
            <person name="Huang H."/>
            <person name="Zhang F."/>
            <person name="Xu H."/>
            <person name="Li N."/>
            <person name="Zhao C."/>
            <person name="Li S."/>
            <person name="Dong L."/>
            <person name="Huang Y."/>
            <person name="Li L."/>
            <person name="Xi Y."/>
            <person name="Qi Q."/>
            <person name="Li W."/>
            <person name="Zhang B."/>
            <person name="Hu W."/>
            <person name="Zhang Y."/>
            <person name="Tian X."/>
            <person name="Jiao Y."/>
            <person name="Liang X."/>
            <person name="Jin J."/>
            <person name="Gao L."/>
            <person name="Zheng W."/>
            <person name="Hao B."/>
            <person name="Liu S.-M."/>
            <person name="Wang W."/>
            <person name="Yuan L."/>
            <person name="Cao M."/>
            <person name="McDermott J."/>
            <person name="Samudrala R."/>
            <person name="Wang J."/>
            <person name="Wong G.K.-S."/>
            <person name="Yang H."/>
        </authorList>
    </citation>
    <scope>NUCLEOTIDE SEQUENCE [LARGE SCALE GENOMIC DNA]</scope>
    <source>
        <strain>cv. Nipponbare</strain>
    </source>
</reference>
<reference key="6">
    <citation type="journal article" date="2004" name="Plant Physiol.">
        <title>Calcium sensors and their interacting protein kinases: genomics of the Arabidopsis and rice CBL-CIPK signaling networks.</title>
        <authorList>
            <person name="Kolukisaoglu U."/>
            <person name="Weinl S."/>
            <person name="Blazevic D."/>
            <person name="Batistic O."/>
            <person name="Kudla J."/>
        </authorList>
    </citation>
    <scope>GENE FAMILY</scope>
    <scope>NOMENCLATURE</scope>
</reference>
<reference key="7">
    <citation type="journal article" date="2007" name="Plant Physiol.">
        <title>Characterization of stress-responsive CIPK genes in rice for stress tolerance improvement.</title>
        <authorList>
            <person name="Xiang Y."/>
            <person name="Huang Y."/>
            <person name="Xiong L."/>
        </authorList>
    </citation>
    <scope>INDUCTION</scope>
</reference>
<proteinExistence type="evidence at transcript level"/>
<comment type="function">
    <text evidence="1">CIPK serine-threonine protein kinases interact with CBL proteins. Binding of a CBL protein to the regulatory NAF domain of CIPK protein lead to the activation of the kinase in a calcium-dependent manner (By similarity).</text>
</comment>
<comment type="catalytic activity">
    <reaction>
        <text>L-seryl-[protein] + ATP = O-phospho-L-seryl-[protein] + ADP + H(+)</text>
        <dbReference type="Rhea" id="RHEA:17989"/>
        <dbReference type="Rhea" id="RHEA-COMP:9863"/>
        <dbReference type="Rhea" id="RHEA-COMP:11604"/>
        <dbReference type="ChEBI" id="CHEBI:15378"/>
        <dbReference type="ChEBI" id="CHEBI:29999"/>
        <dbReference type="ChEBI" id="CHEBI:30616"/>
        <dbReference type="ChEBI" id="CHEBI:83421"/>
        <dbReference type="ChEBI" id="CHEBI:456216"/>
        <dbReference type="EC" id="2.7.11.1"/>
    </reaction>
</comment>
<comment type="catalytic activity">
    <reaction>
        <text>L-threonyl-[protein] + ATP = O-phospho-L-threonyl-[protein] + ADP + H(+)</text>
        <dbReference type="Rhea" id="RHEA:46608"/>
        <dbReference type="Rhea" id="RHEA-COMP:11060"/>
        <dbReference type="Rhea" id="RHEA-COMP:11605"/>
        <dbReference type="ChEBI" id="CHEBI:15378"/>
        <dbReference type="ChEBI" id="CHEBI:30013"/>
        <dbReference type="ChEBI" id="CHEBI:30616"/>
        <dbReference type="ChEBI" id="CHEBI:61977"/>
        <dbReference type="ChEBI" id="CHEBI:456216"/>
        <dbReference type="EC" id="2.7.11.1"/>
    </reaction>
</comment>
<comment type="cofactor">
    <cofactor evidence="1">
        <name>Mn(2+)</name>
        <dbReference type="ChEBI" id="CHEBI:29035"/>
    </cofactor>
</comment>
<comment type="induction">
    <text evidence="5">By salt stress.</text>
</comment>
<comment type="domain">
    <text evidence="1">The activation loop within the kinase domain is the target of phosphorylation/activation by upstream protein kinases. The PPI motif mediates the interaction with the ABI (abscisic acid-insensitive) phosphatases (By similarity).</text>
</comment>
<comment type="similarity">
    <text evidence="6">Belongs to the protein kinase superfamily. CAMK Ser/Thr protein kinase family. SNF1 subfamily.</text>
</comment>
<protein>
    <recommendedName>
        <fullName>CBL-interacting protein kinase 28</fullName>
        <ecNumber>2.7.11.1</ecNumber>
    </recommendedName>
    <alternativeName>
        <fullName>OsCIPK28</fullName>
    </alternativeName>
</protein>
<feature type="chain" id="PRO_0000338386" description="CBL-interacting protein kinase 28">
    <location>
        <begin position="1"/>
        <end position="435"/>
    </location>
</feature>
<feature type="domain" description="Protein kinase" evidence="2">
    <location>
        <begin position="11"/>
        <end position="265"/>
    </location>
</feature>
<feature type="domain" description="NAF" evidence="3">
    <location>
        <begin position="283"/>
        <end position="329"/>
    </location>
</feature>
<feature type="region of interest" description="Activation loop" evidence="1">
    <location>
        <begin position="151"/>
        <end position="180"/>
    </location>
</feature>
<feature type="region of interest" description="PPI" evidence="1">
    <location>
        <begin position="334"/>
        <end position="363"/>
    </location>
</feature>
<feature type="active site" description="Proton acceptor" evidence="2 4">
    <location>
        <position position="133"/>
    </location>
</feature>
<feature type="binding site" evidence="2">
    <location>
        <begin position="17"/>
        <end position="25"/>
    </location>
    <ligand>
        <name>ATP</name>
        <dbReference type="ChEBI" id="CHEBI:30616"/>
    </ligand>
</feature>
<feature type="binding site" evidence="2">
    <location>
        <position position="40"/>
    </location>
    <ligand>
        <name>ATP</name>
        <dbReference type="ChEBI" id="CHEBI:30616"/>
    </ligand>
</feature>
<keyword id="KW-0067">ATP-binding</keyword>
<keyword id="KW-0418">Kinase</keyword>
<keyword id="KW-0464">Manganese</keyword>
<keyword id="KW-0547">Nucleotide-binding</keyword>
<keyword id="KW-1185">Reference proteome</keyword>
<keyword id="KW-0723">Serine/threonine-protein kinase</keyword>
<keyword id="KW-0808">Transferase</keyword>
<gene>
    <name type="primary">CIPK28</name>
    <name type="ordered locus">Os05g0476350</name>
    <name type="ordered locus">LOC_Os05g39870</name>
    <name type="ORF">OsJ_018151</name>
</gene>
<accession>A3B529</accession>
<accession>A0A0P0WNN7</accession>
<name>CIPKS_ORYSJ</name>